<dbReference type="EMBL" id="CP001089">
    <property type="protein sequence ID" value="ACD95385.1"/>
    <property type="molecule type" value="Genomic_DNA"/>
</dbReference>
<dbReference type="RefSeq" id="WP_012469727.1">
    <property type="nucleotide sequence ID" value="NC_010814.1"/>
</dbReference>
<dbReference type="SMR" id="B3EAE7"/>
<dbReference type="STRING" id="398767.Glov_1669"/>
<dbReference type="KEGG" id="glo:Glov_1669"/>
<dbReference type="eggNOG" id="COG0532">
    <property type="taxonomic scope" value="Bacteria"/>
</dbReference>
<dbReference type="HOGENOM" id="CLU_006301_9_3_7"/>
<dbReference type="OrthoDB" id="9811804at2"/>
<dbReference type="Proteomes" id="UP000002420">
    <property type="component" value="Chromosome"/>
</dbReference>
<dbReference type="GO" id="GO:0005829">
    <property type="term" value="C:cytosol"/>
    <property type="evidence" value="ECO:0007669"/>
    <property type="project" value="TreeGrafter"/>
</dbReference>
<dbReference type="GO" id="GO:0005525">
    <property type="term" value="F:GTP binding"/>
    <property type="evidence" value="ECO:0007669"/>
    <property type="project" value="UniProtKB-KW"/>
</dbReference>
<dbReference type="GO" id="GO:0003924">
    <property type="term" value="F:GTPase activity"/>
    <property type="evidence" value="ECO:0007669"/>
    <property type="project" value="UniProtKB-UniRule"/>
</dbReference>
<dbReference type="GO" id="GO:0003743">
    <property type="term" value="F:translation initiation factor activity"/>
    <property type="evidence" value="ECO:0007669"/>
    <property type="project" value="UniProtKB-UniRule"/>
</dbReference>
<dbReference type="CDD" id="cd01887">
    <property type="entry name" value="IF2_eIF5B"/>
    <property type="match status" value="1"/>
</dbReference>
<dbReference type="CDD" id="cd03702">
    <property type="entry name" value="IF2_mtIF2_II"/>
    <property type="match status" value="1"/>
</dbReference>
<dbReference type="CDD" id="cd03692">
    <property type="entry name" value="mtIF2_IVc"/>
    <property type="match status" value="1"/>
</dbReference>
<dbReference type="FunFam" id="2.40.30.10:FF:000007">
    <property type="entry name" value="Translation initiation factor IF-2"/>
    <property type="match status" value="1"/>
</dbReference>
<dbReference type="FunFam" id="2.40.30.10:FF:000008">
    <property type="entry name" value="Translation initiation factor IF-2"/>
    <property type="match status" value="1"/>
</dbReference>
<dbReference type="FunFam" id="3.40.50.10050:FF:000001">
    <property type="entry name" value="Translation initiation factor IF-2"/>
    <property type="match status" value="1"/>
</dbReference>
<dbReference type="FunFam" id="3.40.50.300:FF:000019">
    <property type="entry name" value="Translation initiation factor IF-2"/>
    <property type="match status" value="1"/>
</dbReference>
<dbReference type="Gene3D" id="1.10.10.2480">
    <property type="match status" value="1"/>
</dbReference>
<dbReference type="Gene3D" id="3.40.50.300">
    <property type="entry name" value="P-loop containing nucleotide triphosphate hydrolases"/>
    <property type="match status" value="1"/>
</dbReference>
<dbReference type="Gene3D" id="2.40.30.10">
    <property type="entry name" value="Translation factors"/>
    <property type="match status" value="2"/>
</dbReference>
<dbReference type="Gene3D" id="3.40.50.10050">
    <property type="entry name" value="Translation initiation factor IF- 2, domain 3"/>
    <property type="match status" value="1"/>
</dbReference>
<dbReference type="HAMAP" id="MF_00100_B">
    <property type="entry name" value="IF_2_B"/>
    <property type="match status" value="1"/>
</dbReference>
<dbReference type="InterPro" id="IPR053905">
    <property type="entry name" value="EF-G-like_DII"/>
</dbReference>
<dbReference type="InterPro" id="IPR044145">
    <property type="entry name" value="IF2_II"/>
</dbReference>
<dbReference type="InterPro" id="IPR006847">
    <property type="entry name" value="IF2_N"/>
</dbReference>
<dbReference type="InterPro" id="IPR027417">
    <property type="entry name" value="P-loop_NTPase"/>
</dbReference>
<dbReference type="InterPro" id="IPR005225">
    <property type="entry name" value="Small_GTP-bd"/>
</dbReference>
<dbReference type="InterPro" id="IPR000795">
    <property type="entry name" value="T_Tr_GTP-bd_dom"/>
</dbReference>
<dbReference type="InterPro" id="IPR000178">
    <property type="entry name" value="TF_IF2_bacterial-like"/>
</dbReference>
<dbReference type="InterPro" id="IPR015760">
    <property type="entry name" value="TIF_IF2"/>
</dbReference>
<dbReference type="InterPro" id="IPR023115">
    <property type="entry name" value="TIF_IF2_dom3"/>
</dbReference>
<dbReference type="InterPro" id="IPR036925">
    <property type="entry name" value="TIF_IF2_dom3_sf"/>
</dbReference>
<dbReference type="InterPro" id="IPR009000">
    <property type="entry name" value="Transl_B-barrel_sf"/>
</dbReference>
<dbReference type="NCBIfam" id="TIGR00487">
    <property type="entry name" value="IF-2"/>
    <property type="match status" value="1"/>
</dbReference>
<dbReference type="NCBIfam" id="TIGR00231">
    <property type="entry name" value="small_GTP"/>
    <property type="match status" value="1"/>
</dbReference>
<dbReference type="PANTHER" id="PTHR43381:SF5">
    <property type="entry name" value="TR-TYPE G DOMAIN-CONTAINING PROTEIN"/>
    <property type="match status" value="1"/>
</dbReference>
<dbReference type="PANTHER" id="PTHR43381">
    <property type="entry name" value="TRANSLATION INITIATION FACTOR IF-2-RELATED"/>
    <property type="match status" value="1"/>
</dbReference>
<dbReference type="Pfam" id="PF22042">
    <property type="entry name" value="EF-G_D2"/>
    <property type="match status" value="1"/>
</dbReference>
<dbReference type="Pfam" id="PF00009">
    <property type="entry name" value="GTP_EFTU"/>
    <property type="match status" value="1"/>
</dbReference>
<dbReference type="Pfam" id="PF11987">
    <property type="entry name" value="IF-2"/>
    <property type="match status" value="1"/>
</dbReference>
<dbReference type="Pfam" id="PF04760">
    <property type="entry name" value="IF2_N"/>
    <property type="match status" value="2"/>
</dbReference>
<dbReference type="PRINTS" id="PR00449">
    <property type="entry name" value="RASTRNSFRMNG"/>
</dbReference>
<dbReference type="SUPFAM" id="SSF52156">
    <property type="entry name" value="Initiation factor IF2/eIF5b, domain 3"/>
    <property type="match status" value="1"/>
</dbReference>
<dbReference type="SUPFAM" id="SSF52540">
    <property type="entry name" value="P-loop containing nucleoside triphosphate hydrolases"/>
    <property type="match status" value="1"/>
</dbReference>
<dbReference type="SUPFAM" id="SSF50447">
    <property type="entry name" value="Translation proteins"/>
    <property type="match status" value="2"/>
</dbReference>
<dbReference type="PROSITE" id="PS51722">
    <property type="entry name" value="G_TR_2"/>
    <property type="match status" value="1"/>
</dbReference>
<dbReference type="PROSITE" id="PS01176">
    <property type="entry name" value="IF2"/>
    <property type="match status" value="1"/>
</dbReference>
<feature type="chain" id="PRO_1000093789" description="Translation initiation factor IF-2">
    <location>
        <begin position="1"/>
        <end position="949"/>
    </location>
</feature>
<feature type="domain" description="tr-type G">
    <location>
        <begin position="449"/>
        <end position="618"/>
    </location>
</feature>
<feature type="region of interest" description="Disordered" evidence="3">
    <location>
        <begin position="46"/>
        <end position="82"/>
    </location>
</feature>
<feature type="region of interest" description="Disordered" evidence="3">
    <location>
        <begin position="145"/>
        <end position="176"/>
    </location>
</feature>
<feature type="region of interest" description="Disordered" evidence="3">
    <location>
        <begin position="188"/>
        <end position="361"/>
    </location>
</feature>
<feature type="region of interest" description="G1" evidence="1">
    <location>
        <begin position="458"/>
        <end position="465"/>
    </location>
</feature>
<feature type="region of interest" description="G2" evidence="1">
    <location>
        <begin position="483"/>
        <end position="487"/>
    </location>
</feature>
<feature type="region of interest" description="G3" evidence="1">
    <location>
        <begin position="504"/>
        <end position="507"/>
    </location>
</feature>
<feature type="region of interest" description="G4" evidence="1">
    <location>
        <begin position="558"/>
        <end position="561"/>
    </location>
</feature>
<feature type="region of interest" description="G5" evidence="1">
    <location>
        <begin position="594"/>
        <end position="596"/>
    </location>
</feature>
<feature type="compositionally biased region" description="Low complexity" evidence="3">
    <location>
        <begin position="152"/>
        <end position="162"/>
    </location>
</feature>
<feature type="compositionally biased region" description="Pro residues" evidence="3">
    <location>
        <begin position="163"/>
        <end position="172"/>
    </location>
</feature>
<feature type="compositionally biased region" description="Low complexity" evidence="3">
    <location>
        <begin position="263"/>
        <end position="276"/>
    </location>
</feature>
<feature type="compositionally biased region" description="Basic and acidic residues" evidence="3">
    <location>
        <begin position="334"/>
        <end position="344"/>
    </location>
</feature>
<feature type="binding site" evidence="2">
    <location>
        <begin position="458"/>
        <end position="465"/>
    </location>
    <ligand>
        <name>GTP</name>
        <dbReference type="ChEBI" id="CHEBI:37565"/>
    </ligand>
</feature>
<feature type="binding site" evidence="2">
    <location>
        <begin position="504"/>
        <end position="508"/>
    </location>
    <ligand>
        <name>GTP</name>
        <dbReference type="ChEBI" id="CHEBI:37565"/>
    </ligand>
</feature>
<feature type="binding site" evidence="2">
    <location>
        <begin position="558"/>
        <end position="561"/>
    </location>
    <ligand>
        <name>GTP</name>
        <dbReference type="ChEBI" id="CHEBI:37565"/>
    </ligand>
</feature>
<name>IF2_TRIL1</name>
<keyword id="KW-0963">Cytoplasm</keyword>
<keyword id="KW-0342">GTP-binding</keyword>
<keyword id="KW-0396">Initiation factor</keyword>
<keyword id="KW-0547">Nucleotide-binding</keyword>
<keyword id="KW-0648">Protein biosynthesis</keyword>
<keyword id="KW-1185">Reference proteome</keyword>
<gene>
    <name evidence="2" type="primary">infB</name>
    <name type="ordered locus">Glov_1669</name>
</gene>
<evidence type="ECO:0000250" key="1"/>
<evidence type="ECO:0000255" key="2">
    <source>
        <dbReference type="HAMAP-Rule" id="MF_00100"/>
    </source>
</evidence>
<evidence type="ECO:0000256" key="3">
    <source>
        <dbReference type="SAM" id="MobiDB-lite"/>
    </source>
</evidence>
<accession>B3EAE7</accession>
<proteinExistence type="inferred from homology"/>
<organism>
    <name type="scientific">Trichlorobacter lovleyi (strain ATCC BAA-1151 / DSM 17278 / SZ)</name>
    <name type="common">Geobacter lovleyi</name>
    <dbReference type="NCBI Taxonomy" id="398767"/>
    <lineage>
        <taxon>Bacteria</taxon>
        <taxon>Pseudomonadati</taxon>
        <taxon>Thermodesulfobacteriota</taxon>
        <taxon>Desulfuromonadia</taxon>
        <taxon>Geobacterales</taxon>
        <taxon>Geobacteraceae</taxon>
        <taxon>Trichlorobacter</taxon>
    </lineage>
</organism>
<sequence>MSKTRVSNLAEKLGIDTKEVLARLKALGYDAKAGSSTVDDEAVAKLTASRPAESGPEEVRVTTNIVRRRSRPSAAAEPEAEAPAVVEPAAPAAPAVAVEKAAPVIPERVSVVKKAVEAIVAPAVTEAAPVPAAVTAHVDAGTAAEPAVAQEASPAVTAAKPVPATPAAPPQPERASATQARILGMIEIPITPEARPYRREPGRGPGPGGDRGPRPTGGQDNRGPRPAGTQDNRGPRPTGGQDSRGPRPAGAQDSRGPRPAGPPRDAAAPRPAGARPVQLTQVDLPPQGEERRKTLGPNRKPGGPAKDTAADKAKKGAAAKGKGREQLSKQALLSREERQFDPFHKSRKKGKEREEPGKTELTTPKAIKRIIKISETITIGELAKRMGIKATDLIKAMMKMGSMVTINHVLDHDAAVLLASDYGYEVENVAVDLDEILEFTPDAPELLQERPPVVTIMGHVDHGKTSLLDAIREANVIAGEAGGITQHIGAYDVELHGRKITFLDTPGHEAFTAMRARGAKVTDIVILVVAADDGVMPQTKEAINHSKAAGVPIIVAINKIDKPDARPEKVKQELTEHGIVSSEWGGDVTMVEVSAKKRLNLEELLEMILLQADLMDLKANPDKAAKGTIVEGKLDKGRGPVATVLVQEGTLRTGDYCVVGVHSGRVRAMQNDRGERVLAAGPAMPVEVVGLPGVPDAGDIFVAMTDEKQAKEIATLRQIKQRELELAKHAKMSLEQLYEKIQKGEVKDLNVIVKADVQGSVEAVAESLRKLSTEAVRLNVIHTAVGAITETDVNLATASNAIIIGFSIRPEVKAQAMAEKEGVDIRLYNVIYDAVDDVRKAMEGLLEPVFKEKYLGRAEIREIFSVPKVGNVAGCYIQDGKILRNAQVRLLRDNVVVYQGKLGTLRRFKDDVKEVATGYECGMGLENYNDIKVGDIIEAFEMEKVAAKL</sequence>
<comment type="function">
    <text evidence="2">One of the essential components for the initiation of protein synthesis. Protects formylmethionyl-tRNA from spontaneous hydrolysis and promotes its binding to the 30S ribosomal subunits. Also involved in the hydrolysis of GTP during the formation of the 70S ribosomal complex.</text>
</comment>
<comment type="subcellular location">
    <subcellularLocation>
        <location evidence="2">Cytoplasm</location>
    </subcellularLocation>
</comment>
<comment type="similarity">
    <text evidence="2">Belongs to the TRAFAC class translation factor GTPase superfamily. Classic translation factor GTPase family. IF-2 subfamily.</text>
</comment>
<reference key="1">
    <citation type="submission" date="2008-05" db="EMBL/GenBank/DDBJ databases">
        <title>Complete sequence of chromosome of Geobacter lovleyi SZ.</title>
        <authorList>
            <consortium name="US DOE Joint Genome Institute"/>
            <person name="Lucas S."/>
            <person name="Copeland A."/>
            <person name="Lapidus A."/>
            <person name="Glavina del Rio T."/>
            <person name="Dalin E."/>
            <person name="Tice H."/>
            <person name="Bruce D."/>
            <person name="Goodwin L."/>
            <person name="Pitluck S."/>
            <person name="Chertkov O."/>
            <person name="Meincke L."/>
            <person name="Brettin T."/>
            <person name="Detter J.C."/>
            <person name="Han C."/>
            <person name="Tapia R."/>
            <person name="Kuske C.R."/>
            <person name="Schmutz J."/>
            <person name="Larimer F."/>
            <person name="Land M."/>
            <person name="Hauser L."/>
            <person name="Kyrpides N."/>
            <person name="Mikhailova N."/>
            <person name="Sung Y."/>
            <person name="Fletcher K.E."/>
            <person name="Ritalahti K.M."/>
            <person name="Loeffler F.E."/>
            <person name="Richardson P."/>
        </authorList>
    </citation>
    <scope>NUCLEOTIDE SEQUENCE [LARGE SCALE GENOMIC DNA]</scope>
    <source>
        <strain>ATCC BAA-1151 / DSM 17278 / SZ</strain>
    </source>
</reference>
<protein>
    <recommendedName>
        <fullName evidence="2">Translation initiation factor IF-2</fullName>
    </recommendedName>
</protein>